<gene>
    <name type="ordered locus">Rleg2_1519</name>
</gene>
<keyword id="KW-0378">Hydrolase</keyword>
<keyword id="KW-1185">Reference proteome</keyword>
<protein>
    <recommendedName>
        <fullName evidence="1">UPF0173 metal-dependent hydrolase Rleg2_1519</fullName>
    </recommendedName>
</protein>
<evidence type="ECO:0000255" key="1">
    <source>
        <dbReference type="HAMAP-Rule" id="MF_00457"/>
    </source>
</evidence>
<accession>B5ZMI8</accession>
<organism>
    <name type="scientific">Rhizobium leguminosarum bv. trifolii (strain WSM2304)</name>
    <dbReference type="NCBI Taxonomy" id="395492"/>
    <lineage>
        <taxon>Bacteria</taxon>
        <taxon>Pseudomonadati</taxon>
        <taxon>Pseudomonadota</taxon>
        <taxon>Alphaproteobacteria</taxon>
        <taxon>Hyphomicrobiales</taxon>
        <taxon>Rhizobiaceae</taxon>
        <taxon>Rhizobium/Agrobacterium group</taxon>
        <taxon>Rhizobium</taxon>
    </lineage>
</organism>
<reference key="1">
    <citation type="journal article" date="2010" name="Stand. Genomic Sci.">
        <title>Complete genome sequence of Rhizobium leguminosarum bv trifolii strain WSM2304, an effective microsymbiont of the South American clover Trifolium polymorphum.</title>
        <authorList>
            <person name="Reeve W."/>
            <person name="O'Hara G."/>
            <person name="Chain P."/>
            <person name="Ardley J."/>
            <person name="Brau L."/>
            <person name="Nandesena K."/>
            <person name="Tiwari R."/>
            <person name="Malfatti S."/>
            <person name="Kiss H."/>
            <person name="Lapidus A."/>
            <person name="Copeland A."/>
            <person name="Nolan M."/>
            <person name="Land M."/>
            <person name="Ivanova N."/>
            <person name="Mavromatis K."/>
            <person name="Markowitz V."/>
            <person name="Kyrpides N."/>
            <person name="Melino V."/>
            <person name="Denton M."/>
            <person name="Yates R."/>
            <person name="Howieson J."/>
        </authorList>
    </citation>
    <scope>NUCLEOTIDE SEQUENCE [LARGE SCALE GENOMIC DNA]</scope>
    <source>
        <strain>WSM2304</strain>
    </source>
</reference>
<feature type="chain" id="PRO_0000367204" description="UPF0173 metal-dependent hydrolase Rleg2_1519">
    <location>
        <begin position="1"/>
        <end position="234"/>
    </location>
</feature>
<dbReference type="EMBL" id="CP001191">
    <property type="protein sequence ID" value="ACI54810.1"/>
    <property type="molecule type" value="Genomic_DNA"/>
</dbReference>
<dbReference type="RefSeq" id="WP_012557507.1">
    <property type="nucleotide sequence ID" value="NC_011369.1"/>
</dbReference>
<dbReference type="SMR" id="B5ZMI8"/>
<dbReference type="STRING" id="395492.Rleg2_1519"/>
<dbReference type="KEGG" id="rlt:Rleg2_1519"/>
<dbReference type="eggNOG" id="COG2220">
    <property type="taxonomic scope" value="Bacteria"/>
</dbReference>
<dbReference type="HOGENOM" id="CLU_070010_4_0_5"/>
<dbReference type="Proteomes" id="UP000008330">
    <property type="component" value="Chromosome"/>
</dbReference>
<dbReference type="GO" id="GO:0016787">
    <property type="term" value="F:hydrolase activity"/>
    <property type="evidence" value="ECO:0007669"/>
    <property type="project" value="UniProtKB-UniRule"/>
</dbReference>
<dbReference type="Gene3D" id="3.60.15.10">
    <property type="entry name" value="Ribonuclease Z/Hydroxyacylglutathione hydrolase-like"/>
    <property type="match status" value="1"/>
</dbReference>
<dbReference type="HAMAP" id="MF_00457">
    <property type="entry name" value="UPF0173"/>
    <property type="match status" value="1"/>
</dbReference>
<dbReference type="InterPro" id="IPR001279">
    <property type="entry name" value="Metallo-B-lactamas"/>
</dbReference>
<dbReference type="InterPro" id="IPR036866">
    <property type="entry name" value="RibonucZ/Hydroxyglut_hydro"/>
</dbReference>
<dbReference type="InterPro" id="IPR022877">
    <property type="entry name" value="UPF0173"/>
</dbReference>
<dbReference type="InterPro" id="IPR050114">
    <property type="entry name" value="UPF0173_UPF0282_UlaG_hydrolase"/>
</dbReference>
<dbReference type="NCBIfam" id="NF001911">
    <property type="entry name" value="PRK00685.1"/>
    <property type="match status" value="1"/>
</dbReference>
<dbReference type="PANTHER" id="PTHR43546:SF3">
    <property type="entry name" value="UPF0173 METAL-DEPENDENT HYDROLASE MJ1163"/>
    <property type="match status" value="1"/>
</dbReference>
<dbReference type="PANTHER" id="PTHR43546">
    <property type="entry name" value="UPF0173 METAL-DEPENDENT HYDROLASE MJ1163-RELATED"/>
    <property type="match status" value="1"/>
</dbReference>
<dbReference type="Pfam" id="PF12706">
    <property type="entry name" value="Lactamase_B_2"/>
    <property type="match status" value="1"/>
</dbReference>
<dbReference type="SMART" id="SM00849">
    <property type="entry name" value="Lactamase_B"/>
    <property type="match status" value="1"/>
</dbReference>
<dbReference type="SUPFAM" id="SSF56281">
    <property type="entry name" value="Metallo-hydrolase/oxidoreductase"/>
    <property type="match status" value="1"/>
</dbReference>
<comment type="similarity">
    <text evidence="1">Belongs to the UPF0173 family.</text>
</comment>
<sequence length="234" mass="24613">MKITWLGHSAFRIEIGKATILLDPFLSHNASFSGQDIKHVSAGVTHILLTHGHGDHVGDTVALAKETGAVVLANADLAAWLGSKGLDRLEMGNTGGTIALGSFSATFTNALHSSAQITEDGVSHALGNANGLMLHFEDEASILAMGDTDIFADMALINELHQPDIGLVPIGDRFTMGGAVAALACRRYFNFKTAIPCHFGTFPIIEQTADKFVAGMEGSKTDVKALKAAESLSI</sequence>
<name>Y1519_RHILW</name>
<proteinExistence type="inferred from homology"/>